<dbReference type="EMBL" id="AF378906">
    <property type="protein sequence ID" value="AAK63256.1"/>
    <property type="molecule type" value="mRNA"/>
</dbReference>
<dbReference type="EMBL" id="AY848979">
    <property type="protein sequence ID" value="AAX50200.1"/>
    <property type="molecule type" value="mRNA"/>
</dbReference>
<dbReference type="EMBL" id="AY848994">
    <property type="protein sequence ID" value="AAX50215.1"/>
    <property type="molecule type" value="mRNA"/>
</dbReference>
<dbReference type="SMR" id="P83082"/>
<dbReference type="GO" id="GO:0005576">
    <property type="term" value="C:extracellular region"/>
    <property type="evidence" value="ECO:0007669"/>
    <property type="project" value="UniProtKB-SubCell"/>
</dbReference>
<dbReference type="GO" id="GO:0090729">
    <property type="term" value="F:toxin activity"/>
    <property type="evidence" value="ECO:0007669"/>
    <property type="project" value="UniProtKB-KW"/>
</dbReference>
<dbReference type="GO" id="GO:0042742">
    <property type="term" value="P:defense response to bacterium"/>
    <property type="evidence" value="ECO:0007669"/>
    <property type="project" value="UniProtKB-KW"/>
</dbReference>
<dbReference type="GO" id="GO:0050832">
    <property type="term" value="P:defense response to fungus"/>
    <property type="evidence" value="ECO:0007669"/>
    <property type="project" value="UniProtKB-KW"/>
</dbReference>
<dbReference type="GO" id="GO:0031640">
    <property type="term" value="P:killing of cells of another organism"/>
    <property type="evidence" value="ECO:0007669"/>
    <property type="project" value="UniProtKB-KW"/>
</dbReference>
<dbReference type="InterPro" id="IPR007962">
    <property type="entry name" value="Bombinin"/>
</dbReference>
<dbReference type="Pfam" id="PF05298">
    <property type="entry name" value="Bombinin"/>
    <property type="match status" value="1"/>
</dbReference>
<reference key="1">
    <citation type="journal article" date="2002" name="Peptides">
        <title>Antimicrobial peptides from skin secretions of Chinese red belly toad Bombina maxima.</title>
        <authorList>
            <person name="Lai R."/>
            <person name="Zheng Y.-T."/>
            <person name="Shen J.-H."/>
            <person name="Liu G.-J."/>
            <person name="Liu H."/>
            <person name="Lee W.-H."/>
            <person name="Tang S.-Z."/>
            <person name="Zhang Y."/>
        </authorList>
    </citation>
    <scope>NUCLEOTIDE SEQUENCE [MRNA]</scope>
    <scope>PROTEIN SEQUENCE OF 44-70 AND 124-143</scope>
    <scope>AMIDATION AT ILE-143</scope>
    <scope>FUNCTION OF MAXIMIN-3 AND MAXIMIN-H2</scope>
    <scope>MASS SPECTROMETRY</scope>
    <scope>TOXIC DOSE</scope>
    <source>
        <tissue>Skin</tissue>
        <tissue>Skin secretion</tissue>
    </source>
</reference>
<reference key="2">
    <citation type="journal article" date="2005" name="Eur. J. Immunol.">
        <title>Variety of antimicrobial peptides in the Bombina maxima toad and evidence of their rapid diversification.</title>
        <authorList>
            <person name="Lee W.-H."/>
            <person name="Li Y."/>
            <person name="Lai R."/>
            <person name="Li S."/>
            <person name="Zhang Y."/>
            <person name="Wang W."/>
        </authorList>
    </citation>
    <scope>NUCLEOTIDE SEQUENCE [MRNA]</scope>
    <scope>AMIDATION AT ILE-143</scope>
    <source>
        <tissue>Skin</tissue>
    </source>
</reference>
<keyword id="KW-0027">Amidation</keyword>
<keyword id="KW-0878">Amphibian defense peptide</keyword>
<keyword id="KW-0044">Antibiotic</keyword>
<keyword id="KW-0929">Antimicrobial</keyword>
<keyword id="KW-0165">Cleavage on pair of basic residues</keyword>
<keyword id="KW-0204">Cytolysis</keyword>
<keyword id="KW-0903">Direct protein sequencing</keyword>
<keyword id="KW-0295">Fungicide</keyword>
<keyword id="KW-0354">Hemolysis</keyword>
<keyword id="KW-0964">Secreted</keyword>
<keyword id="KW-0732">Signal</keyword>
<keyword id="KW-0800">Toxin</keyword>
<evidence type="ECO:0000255" key="1"/>
<evidence type="ECO:0000269" key="2">
    <source>
    </source>
</evidence>
<evidence type="ECO:0000269" key="3">
    <source>
    </source>
</evidence>
<evidence type="ECO:0000305" key="4"/>
<name>M3H2_BOMMX</name>
<sequence>MNFKYIVAVSFLIASAYARSVQNDEQSLSQRDVLEEESLREIRGIGGKILSGLKTALKGAAKELASTYLHRRRTAEEHEVMKRLEAVMRDLDSLDYPEEASERETRGFNQDEIANLFTKKEKRILGPVLSMVGSALGGLIKKIG</sequence>
<proteinExistence type="evidence at protein level"/>
<accession>P83082</accession>
<accession>Q58T66</accession>
<comment type="function">
    <text evidence="2">Maximin-3 shows antibacterial activity against both Gram-positive and Gram-negative bacteria. It also shows antimicrobial activity against the fungus C.albicans, but not against A.flavus nor P.uticale. It has little hemolytic activity. It possess a significant cytotoxicity against tumor cell lines. It possess a significant anti-HIV activity. It shows high spermicidal activity.</text>
</comment>
<comment type="function">
    <text evidence="2">Maximin-H2 shows antibacterial activity against both Gram-positive and Gram-negative bacteria. It also shows antimicrobial activity against the fungus C.albicans. Shows strong hemolytic activity.</text>
</comment>
<comment type="subcellular location">
    <subcellularLocation>
        <location>Secreted</location>
    </subcellularLocation>
</comment>
<comment type="tissue specificity">
    <text>Expressed by the skin glands.</text>
</comment>
<comment type="mass spectrometry">
    <molecule>Maximin-3</molecule>
</comment>
<comment type="mass spectrometry">
    <molecule>Maximin-H2</molecule>
</comment>
<comment type="toxic dose">
    <text evidence="2">LD(50) is 4.3 mg/kg by intraperitoneal injection into mice.</text>
</comment>
<comment type="similarity">
    <text evidence="4">Belongs to the bombinin family.</text>
</comment>
<organism>
    <name type="scientific">Bombina maxima</name>
    <name type="common">Giant fire-bellied toad</name>
    <name type="synonym">Chinese red belly toad</name>
    <dbReference type="NCBI Taxonomy" id="161274"/>
    <lineage>
        <taxon>Eukaryota</taxon>
        <taxon>Metazoa</taxon>
        <taxon>Chordata</taxon>
        <taxon>Craniata</taxon>
        <taxon>Vertebrata</taxon>
        <taxon>Euteleostomi</taxon>
        <taxon>Amphibia</taxon>
        <taxon>Batrachia</taxon>
        <taxon>Anura</taxon>
        <taxon>Bombinatoridae</taxon>
        <taxon>Bombina</taxon>
    </lineage>
</organism>
<feature type="signal peptide" evidence="1">
    <location>
        <begin position="1"/>
        <end position="18"/>
    </location>
</feature>
<feature type="propeptide" id="PRO_0000003100" evidence="2">
    <location>
        <begin position="19"/>
        <end position="43"/>
    </location>
</feature>
<feature type="peptide" id="PRO_0000003101" description="Maximin-3">
    <location>
        <begin position="44"/>
        <end position="70"/>
    </location>
</feature>
<feature type="propeptide" id="PRO_0000003102" evidence="2">
    <location>
        <begin position="74"/>
        <end position="123"/>
    </location>
</feature>
<feature type="peptide" id="PRO_0000003103" description="Maximin-H2">
    <location>
        <begin position="124"/>
        <end position="143"/>
    </location>
</feature>
<feature type="modified residue" description="Isoleucine amide" evidence="2 3">
    <location>
        <position position="143"/>
    </location>
</feature>
<protein>
    <recommendedName>
        <fullName>Maximins 3/H2</fullName>
    </recommendedName>
    <component>
        <recommendedName>
            <fullName>Maximin-3</fullName>
        </recommendedName>
    </component>
    <component>
        <recommendedName>
            <fullName>Maximin-H2</fullName>
        </recommendedName>
    </component>
</protein>